<organism>
    <name type="scientific">Actinobacillus pleuropneumoniae serotype 3 (strain JL03)</name>
    <dbReference type="NCBI Taxonomy" id="434271"/>
    <lineage>
        <taxon>Bacteria</taxon>
        <taxon>Pseudomonadati</taxon>
        <taxon>Pseudomonadota</taxon>
        <taxon>Gammaproteobacteria</taxon>
        <taxon>Pasteurellales</taxon>
        <taxon>Pasteurellaceae</taxon>
        <taxon>Actinobacillus</taxon>
    </lineage>
</organism>
<name>RBSD_ACTPJ</name>
<reference key="1">
    <citation type="journal article" date="2008" name="PLoS ONE">
        <title>Genome biology of Actinobacillus pleuropneumoniae JL03, an isolate of serotype 3 prevalent in China.</title>
        <authorList>
            <person name="Xu Z."/>
            <person name="Zhou Y."/>
            <person name="Li L."/>
            <person name="Zhou R."/>
            <person name="Xiao S."/>
            <person name="Wan Y."/>
            <person name="Zhang S."/>
            <person name="Wang K."/>
            <person name="Li W."/>
            <person name="Li L."/>
            <person name="Jin H."/>
            <person name="Kang M."/>
            <person name="Dalai B."/>
            <person name="Li T."/>
            <person name="Liu L."/>
            <person name="Cheng Y."/>
            <person name="Zhang L."/>
            <person name="Xu T."/>
            <person name="Zheng H."/>
            <person name="Pu S."/>
            <person name="Wang B."/>
            <person name="Gu W."/>
            <person name="Zhang X.L."/>
            <person name="Zhu G.-F."/>
            <person name="Wang S."/>
            <person name="Zhao G.-P."/>
            <person name="Chen H."/>
        </authorList>
    </citation>
    <scope>NUCLEOTIDE SEQUENCE [LARGE SCALE GENOMIC DNA]</scope>
    <source>
        <strain>JL03</strain>
    </source>
</reference>
<protein>
    <recommendedName>
        <fullName evidence="1">D-ribose pyranase</fullName>
        <ecNumber evidence="1">5.4.99.62</ecNumber>
    </recommendedName>
</protein>
<feature type="chain" id="PRO_0000346164" description="D-ribose pyranase">
    <location>
        <begin position="1"/>
        <end position="139"/>
    </location>
</feature>
<feature type="active site" description="Proton donor" evidence="1">
    <location>
        <position position="20"/>
    </location>
</feature>
<feature type="binding site" evidence="1">
    <location>
        <position position="28"/>
    </location>
    <ligand>
        <name>substrate</name>
    </ligand>
</feature>
<feature type="binding site" evidence="1">
    <location>
        <position position="106"/>
    </location>
    <ligand>
        <name>substrate</name>
    </ligand>
</feature>
<feature type="binding site" evidence="1">
    <location>
        <begin position="128"/>
        <end position="130"/>
    </location>
    <ligand>
        <name>substrate</name>
    </ligand>
</feature>
<proteinExistence type="inferred from homology"/>
<accession>B0BS95</accession>
<keyword id="KW-0119">Carbohydrate metabolism</keyword>
<keyword id="KW-0963">Cytoplasm</keyword>
<keyword id="KW-0413">Isomerase</keyword>
<sequence>MKKTAVLNAQLSGVIASLGHTDGLTICDAGLPIPSEQQCVDLALTKGVPSFLSTLEVVLTELFVERILLAEEIKQANPTIEQQLLEMINKLAQTQGRQIEIEYVVHSEFKQRSNQAKAVVRTGECSPYANVILYSGVPF</sequence>
<dbReference type="EC" id="5.4.99.62" evidence="1"/>
<dbReference type="EMBL" id="CP000687">
    <property type="protein sequence ID" value="ABY70252.1"/>
    <property type="molecule type" value="Genomic_DNA"/>
</dbReference>
<dbReference type="RefSeq" id="WP_005602428.1">
    <property type="nucleotide sequence ID" value="NC_010278.1"/>
</dbReference>
<dbReference type="SMR" id="B0BS95"/>
<dbReference type="KEGG" id="apj:APJL_1700"/>
<dbReference type="HOGENOM" id="CLU_135498_0_0_6"/>
<dbReference type="UniPathway" id="UPA00916">
    <property type="reaction ID" value="UER00888"/>
</dbReference>
<dbReference type="Proteomes" id="UP000008547">
    <property type="component" value="Chromosome"/>
</dbReference>
<dbReference type="GO" id="GO:0005829">
    <property type="term" value="C:cytosol"/>
    <property type="evidence" value="ECO:0007669"/>
    <property type="project" value="TreeGrafter"/>
</dbReference>
<dbReference type="GO" id="GO:0062193">
    <property type="term" value="F:D-ribose pyranase activity"/>
    <property type="evidence" value="ECO:0007669"/>
    <property type="project" value="UniProtKB-EC"/>
</dbReference>
<dbReference type="GO" id="GO:0016872">
    <property type="term" value="F:intramolecular lyase activity"/>
    <property type="evidence" value="ECO:0007669"/>
    <property type="project" value="UniProtKB-UniRule"/>
</dbReference>
<dbReference type="GO" id="GO:0048029">
    <property type="term" value="F:monosaccharide binding"/>
    <property type="evidence" value="ECO:0007669"/>
    <property type="project" value="InterPro"/>
</dbReference>
<dbReference type="GO" id="GO:0019303">
    <property type="term" value="P:D-ribose catabolic process"/>
    <property type="evidence" value="ECO:0007669"/>
    <property type="project" value="UniProtKB-UniRule"/>
</dbReference>
<dbReference type="Gene3D" id="3.40.1650.10">
    <property type="entry name" value="RbsD-like domain"/>
    <property type="match status" value="1"/>
</dbReference>
<dbReference type="HAMAP" id="MF_01661">
    <property type="entry name" value="D_rib_pyranase"/>
    <property type="match status" value="1"/>
</dbReference>
<dbReference type="InterPro" id="IPR023064">
    <property type="entry name" value="D-ribose_pyranase"/>
</dbReference>
<dbReference type="InterPro" id="IPR023750">
    <property type="entry name" value="RbsD-like_sf"/>
</dbReference>
<dbReference type="InterPro" id="IPR007721">
    <property type="entry name" value="RbsD_FucU"/>
</dbReference>
<dbReference type="NCBIfam" id="NF008761">
    <property type="entry name" value="PRK11797.1"/>
    <property type="match status" value="1"/>
</dbReference>
<dbReference type="PANTHER" id="PTHR37831">
    <property type="entry name" value="D-RIBOSE PYRANASE"/>
    <property type="match status" value="1"/>
</dbReference>
<dbReference type="PANTHER" id="PTHR37831:SF1">
    <property type="entry name" value="D-RIBOSE PYRANASE"/>
    <property type="match status" value="1"/>
</dbReference>
<dbReference type="Pfam" id="PF05025">
    <property type="entry name" value="RbsD_FucU"/>
    <property type="match status" value="1"/>
</dbReference>
<dbReference type="SUPFAM" id="SSF102546">
    <property type="entry name" value="RbsD-like"/>
    <property type="match status" value="1"/>
</dbReference>
<comment type="function">
    <text evidence="1">Catalyzes the interconversion of beta-pyran and beta-furan forms of D-ribose.</text>
</comment>
<comment type="catalytic activity">
    <reaction evidence="1">
        <text>beta-D-ribopyranose = beta-D-ribofuranose</text>
        <dbReference type="Rhea" id="RHEA:25432"/>
        <dbReference type="ChEBI" id="CHEBI:27476"/>
        <dbReference type="ChEBI" id="CHEBI:47002"/>
        <dbReference type="EC" id="5.4.99.62"/>
    </reaction>
</comment>
<comment type="pathway">
    <text evidence="1">Carbohydrate metabolism; D-ribose degradation; D-ribose 5-phosphate from beta-D-ribopyranose: step 1/2.</text>
</comment>
<comment type="subunit">
    <text evidence="1">Homodecamer.</text>
</comment>
<comment type="subcellular location">
    <subcellularLocation>
        <location evidence="1">Cytoplasm</location>
    </subcellularLocation>
</comment>
<comment type="similarity">
    <text evidence="1">Belongs to the RbsD / FucU family. RbsD subfamily.</text>
</comment>
<evidence type="ECO:0000255" key="1">
    <source>
        <dbReference type="HAMAP-Rule" id="MF_01661"/>
    </source>
</evidence>
<gene>
    <name evidence="1" type="primary">rbsD</name>
    <name type="ordered locus">APJL_1700</name>
</gene>